<proteinExistence type="evidence at protein level"/>
<feature type="chain" id="PRO_0000461038" description="Cytochrome P450 monooxygenase cle4">
    <location>
        <begin position="1"/>
        <end position="496"/>
    </location>
</feature>
<feature type="transmembrane region" description="Helical" evidence="2">
    <location>
        <begin position="12"/>
        <end position="34"/>
    </location>
</feature>
<feature type="binding site" description="axial binding residue" evidence="3">
    <location>
        <position position="435"/>
    </location>
    <ligand>
        <name>heme</name>
        <dbReference type="ChEBI" id="CHEBI:30413"/>
    </ligand>
    <ligandPart>
        <name>Fe</name>
        <dbReference type="ChEBI" id="CHEBI:18248"/>
    </ligandPart>
</feature>
<organism>
    <name type="scientific">Aspergillus versicolor</name>
    <dbReference type="NCBI Taxonomy" id="46472"/>
    <lineage>
        <taxon>Eukaryota</taxon>
        <taxon>Fungi</taxon>
        <taxon>Dikarya</taxon>
        <taxon>Ascomycota</taxon>
        <taxon>Pezizomycotina</taxon>
        <taxon>Eurotiomycetes</taxon>
        <taxon>Eurotiomycetidae</taxon>
        <taxon>Eurotiales</taxon>
        <taxon>Aspergillaceae</taxon>
        <taxon>Aspergillus</taxon>
        <taxon>Aspergillus subgen. Nidulantes</taxon>
    </lineage>
</organism>
<gene>
    <name evidence="5" type="primary">cle4</name>
</gene>
<evidence type="ECO:0000250" key="1">
    <source>
        <dbReference type="UniProtKB" id="P04798"/>
    </source>
</evidence>
<evidence type="ECO:0000255" key="2"/>
<evidence type="ECO:0000255" key="3">
    <source>
        <dbReference type="PIRSR" id="PIRSR602403-1"/>
    </source>
</evidence>
<evidence type="ECO:0000269" key="4">
    <source ref="1"/>
</evidence>
<evidence type="ECO:0000303" key="5">
    <source ref="1"/>
</evidence>
<evidence type="ECO:0000305" key="6"/>
<reference key="1">
    <citation type="journal article" date="2019" name="Org. Chem. Front.">
        <title>Genome mining for fungal polyketide-diterpenoid hybrids: discovery of key terpene cyclases and multifunctional P450s for structural diversification.</title>
        <authorList>
            <person name="Wang W.G."/>
            <person name="Du L.Q."/>
            <person name="Sheng S.L."/>
            <person name="Li A."/>
            <person name="Li Y.P."/>
            <person name="Cheng G.G."/>
            <person name="Li G.P."/>
            <person name="Sun G."/>
            <person name="Hu Q."/>
            <person name="Matsuda Y."/>
        </authorList>
    </citation>
    <scope>NUCLEOTIDE SEQUENCE [GENOMIC DNA]</scope>
    <scope>FUNCTION</scope>
    <scope>CATALYTIC ACTIVITY</scope>
    <scope>PATHWAY</scope>
    <scope>BIOTECHNOLOGY</scope>
    <source>
        <strain>0312</strain>
    </source>
</reference>
<keyword id="KW-0349">Heme</keyword>
<keyword id="KW-0408">Iron</keyword>
<keyword id="KW-0472">Membrane</keyword>
<keyword id="KW-0479">Metal-binding</keyword>
<keyword id="KW-0503">Monooxygenase</keyword>
<keyword id="KW-0560">Oxidoreductase</keyword>
<keyword id="KW-0812">Transmembrane</keyword>
<keyword id="KW-1133">Transmembrane helix</keyword>
<dbReference type="EC" id="1.-.-.-" evidence="4"/>
<dbReference type="EMBL" id="LC422695">
    <property type="protein sequence ID" value="BBG28474.1"/>
    <property type="molecule type" value="Genomic_DNA"/>
</dbReference>
<dbReference type="SMR" id="A0A3T0ZHK6"/>
<dbReference type="VEuPathDB" id="FungiDB:ASPVEDRAFT_872263"/>
<dbReference type="UniPathway" id="UPA00213"/>
<dbReference type="GO" id="GO:0016020">
    <property type="term" value="C:membrane"/>
    <property type="evidence" value="ECO:0007669"/>
    <property type="project" value="UniProtKB-SubCell"/>
</dbReference>
<dbReference type="GO" id="GO:0020037">
    <property type="term" value="F:heme binding"/>
    <property type="evidence" value="ECO:0007669"/>
    <property type="project" value="InterPro"/>
</dbReference>
<dbReference type="GO" id="GO:0005506">
    <property type="term" value="F:iron ion binding"/>
    <property type="evidence" value="ECO:0007669"/>
    <property type="project" value="InterPro"/>
</dbReference>
<dbReference type="GO" id="GO:0004497">
    <property type="term" value="F:monooxygenase activity"/>
    <property type="evidence" value="ECO:0007669"/>
    <property type="project" value="UniProtKB-KW"/>
</dbReference>
<dbReference type="GO" id="GO:0016705">
    <property type="term" value="F:oxidoreductase activity, acting on paired donors, with incorporation or reduction of molecular oxygen"/>
    <property type="evidence" value="ECO:0007669"/>
    <property type="project" value="InterPro"/>
</dbReference>
<dbReference type="GO" id="GO:0019748">
    <property type="term" value="P:secondary metabolic process"/>
    <property type="evidence" value="ECO:0007669"/>
    <property type="project" value="UniProtKB-ARBA"/>
</dbReference>
<dbReference type="CDD" id="cd11041">
    <property type="entry name" value="CYP503A1-like"/>
    <property type="match status" value="1"/>
</dbReference>
<dbReference type="Gene3D" id="1.10.630.10">
    <property type="entry name" value="Cytochrome P450"/>
    <property type="match status" value="1"/>
</dbReference>
<dbReference type="InterPro" id="IPR001128">
    <property type="entry name" value="Cyt_P450"/>
</dbReference>
<dbReference type="InterPro" id="IPR017972">
    <property type="entry name" value="Cyt_P450_CS"/>
</dbReference>
<dbReference type="InterPro" id="IPR002403">
    <property type="entry name" value="Cyt_P450_E_grp-IV"/>
</dbReference>
<dbReference type="InterPro" id="IPR036396">
    <property type="entry name" value="Cyt_P450_sf"/>
</dbReference>
<dbReference type="PANTHER" id="PTHR46206">
    <property type="entry name" value="CYTOCHROME P450"/>
    <property type="match status" value="1"/>
</dbReference>
<dbReference type="PANTHER" id="PTHR46206:SF3">
    <property type="entry name" value="P450, PUTATIVE (EUROFUNG)-RELATED"/>
    <property type="match status" value="1"/>
</dbReference>
<dbReference type="Pfam" id="PF00067">
    <property type="entry name" value="p450"/>
    <property type="match status" value="1"/>
</dbReference>
<dbReference type="PRINTS" id="PR00465">
    <property type="entry name" value="EP450IV"/>
</dbReference>
<dbReference type="SUPFAM" id="SSF48264">
    <property type="entry name" value="Cytochrome P450"/>
    <property type="match status" value="1"/>
</dbReference>
<dbReference type="PROSITE" id="PS00086">
    <property type="entry name" value="CYTOCHROME_P450"/>
    <property type="match status" value="1"/>
</dbReference>
<accession>A0A3T0ZHK6</accession>
<comment type="function">
    <text evidence="4">Cytochrome P450 monooxygenase; part of the cluster A that mediates the biosynthesis of chevalone E and its oxidized derivatives that possess a unique five-membered lactone ring and can synergistically enhance the cytotoxicity of doxorubicin (DOX) in breast cancer cells (Ref.1). Within the pathway, cle4 is involved in hydroxylation of the chavalone E scaffold at positions C-11 and C-12 and contributes with cle2 to the production of seven oxidation derivatives (Ref.1). The molecular scaffold is commonly biosynthesized by a series of enzymes including the non-reducing polyketide synthase (NR-PKS) cle1 that produces the alpha-pyrone triacetic acid lactone (TAL); The membrane-bound prenyltransferase cle5 that accepts TAL as its substrate to perform a C-3 geranylgeranylation reaction, in which the pathway-dedicated GGPS cle6 is required to provide GGPP, the other substrate of cle5; the FAD-dependent monooxygenase Cle3 that forms an (S)-epoxide ring at the terminal olefin of the geranylgeranyl group; and the terpene cyclase Cle7 that catalyzes the cyclization of the prenyl group that yields the pentacyclic pathway intermediate chevalone E (Ref.1). Chevalone E can derivatize into seven new oxidized analogs by the cytochrome P450 monooxygenases cle2 (acting at C-20) and cle4 (acting at C-11 and C-12) (Ref.1).</text>
</comment>
<comment type="cofactor">
    <cofactor evidence="1">
        <name>heme</name>
        <dbReference type="ChEBI" id="CHEBI:30413"/>
    </cofactor>
</comment>
<comment type="pathway">
    <text evidence="4">Secondary metabolite biosynthesis; terpenoid biosynthesis.</text>
</comment>
<comment type="subcellular location">
    <subcellularLocation>
        <location evidence="2">Membrane</location>
        <topology evidence="2">Single-pass membrane protein</topology>
    </subcellularLocation>
</comment>
<comment type="biotechnology">
    <text evidence="4">Chevalone E derivatives produced by this cluster are interesting candidates for cancer therapy since they synergistically enhance the cytotoxicity of doxorubicin (DOX) in both MDA-MB-231 and MCF-7 breast cancer cell lines.</text>
</comment>
<comment type="similarity">
    <text evidence="6">Belongs to the cytochrome P450 family.</text>
</comment>
<sequence length="496" mass="55639">MTVFDIFTSSTFFTSPFPLTVGILSISLSGVLWYLRRAKAPTQADAPPVYPFDPTTLDRKECKPPILTFGNSMILPNRYAHEIRNNDLLSFRDGLEKDFLTTVPGLEALFTGTFHNDIVWDTASAFSRKIGLLIEPLSTETGIFLQENWSEDTEWHTIPLNESMQFLIAQLTARIFVGNELCRNRDWIQLALGYTANRAAAIKELHQYGRLIPIVHWFLPSCRALRACVRNARPLVEGILNTHRKKHQGEQKEESLDALSWIDGVAGETGVKYDPTLTQLRLAYAAVHTTSDMMTKVLAAICEHDELVKPLREEIVAVVKEHGWTEAALAKMLLLDSVLKETQRLEPLASFTLSRIAREGVTLNDGTRVPKGTQARLTTDNMWNSGIYPEAARFDGYRFVKLRDQDTATGASSGGLSFVSVSANHMGFGYGKHACPGRFFAGAETKIALCHILLKYDLELVDRELAGAKTDGMMIWRDKRAMLRVKRRSDDIGLEF</sequence>
<name>CLE4_ASPVE</name>
<protein>
    <recommendedName>
        <fullName evidence="5">Cytochrome P450 monooxygenase cle4</fullName>
        <ecNumber evidence="4">1.-.-.-</ecNumber>
    </recommendedName>
    <alternativeName>
        <fullName evidence="5">Chevalone E biosynthesis cluster protein 4</fullName>
    </alternativeName>
</protein>